<protein>
    <recommendedName>
        <fullName>ATP-dependent RNA helicase CshA</fullName>
        <ecNumber evidence="1">3.6.4.13</ecNumber>
    </recommendedName>
    <alternativeName>
        <fullName>Autoaggregation-mediating protein</fullName>
    </alternativeName>
</protein>
<keyword id="KW-0067">ATP-binding</keyword>
<keyword id="KW-1003">Cell membrane</keyword>
<keyword id="KW-0963">Cytoplasm</keyword>
<keyword id="KW-0347">Helicase</keyword>
<keyword id="KW-0378">Hydrolase</keyword>
<keyword id="KW-0472">Membrane</keyword>
<keyword id="KW-0547">Nucleotide-binding</keyword>
<keyword id="KW-0694">RNA-binding</keyword>
<keyword id="KW-0346">Stress response</keyword>
<dbReference type="EC" id="3.6.4.13" evidence="1"/>
<dbReference type="EMBL" id="AF091502">
    <property type="protein sequence ID" value="AAD20136.1"/>
    <property type="molecule type" value="Genomic_DNA"/>
</dbReference>
<dbReference type="RefSeq" id="WP_003674631.1">
    <property type="nucleotide sequence ID" value="NZ_RIAU01000001.1"/>
</dbReference>
<dbReference type="SMR" id="Q9Z6C9"/>
<dbReference type="OrthoDB" id="9805696at2"/>
<dbReference type="GO" id="GO:0005829">
    <property type="term" value="C:cytosol"/>
    <property type="evidence" value="ECO:0007669"/>
    <property type="project" value="TreeGrafter"/>
</dbReference>
<dbReference type="GO" id="GO:0005886">
    <property type="term" value="C:plasma membrane"/>
    <property type="evidence" value="ECO:0007669"/>
    <property type="project" value="UniProtKB-SubCell"/>
</dbReference>
<dbReference type="GO" id="GO:0005840">
    <property type="term" value="C:ribosome"/>
    <property type="evidence" value="ECO:0007669"/>
    <property type="project" value="TreeGrafter"/>
</dbReference>
<dbReference type="GO" id="GO:0005524">
    <property type="term" value="F:ATP binding"/>
    <property type="evidence" value="ECO:0007669"/>
    <property type="project" value="UniProtKB-UniRule"/>
</dbReference>
<dbReference type="GO" id="GO:0016887">
    <property type="term" value="F:ATP hydrolysis activity"/>
    <property type="evidence" value="ECO:0007669"/>
    <property type="project" value="RHEA"/>
</dbReference>
<dbReference type="GO" id="GO:0003724">
    <property type="term" value="F:RNA helicase activity"/>
    <property type="evidence" value="ECO:0007669"/>
    <property type="project" value="UniProtKB-UniRule"/>
</dbReference>
<dbReference type="GO" id="GO:0033592">
    <property type="term" value="F:RNA strand annealing activity"/>
    <property type="evidence" value="ECO:0007669"/>
    <property type="project" value="TreeGrafter"/>
</dbReference>
<dbReference type="GO" id="GO:0009409">
    <property type="term" value="P:response to cold"/>
    <property type="evidence" value="ECO:0007669"/>
    <property type="project" value="TreeGrafter"/>
</dbReference>
<dbReference type="GO" id="GO:0006401">
    <property type="term" value="P:RNA catabolic process"/>
    <property type="evidence" value="ECO:0007669"/>
    <property type="project" value="UniProtKB-UniRule"/>
</dbReference>
<dbReference type="CDD" id="cd00268">
    <property type="entry name" value="DEADc"/>
    <property type="match status" value="1"/>
</dbReference>
<dbReference type="CDD" id="cd18787">
    <property type="entry name" value="SF2_C_DEAD"/>
    <property type="match status" value="1"/>
</dbReference>
<dbReference type="FunFam" id="3.40.50.300:FF:000108">
    <property type="entry name" value="ATP-dependent RNA helicase RhlE"/>
    <property type="match status" value="1"/>
</dbReference>
<dbReference type="Gene3D" id="3.40.50.300">
    <property type="entry name" value="P-loop containing nucleotide triphosphate hydrolases"/>
    <property type="match status" value="2"/>
</dbReference>
<dbReference type="HAMAP" id="MF_01493">
    <property type="entry name" value="DEAD_helicase_CshA"/>
    <property type="match status" value="1"/>
</dbReference>
<dbReference type="InterPro" id="IPR011545">
    <property type="entry name" value="DEAD/DEAH_box_helicase_dom"/>
</dbReference>
<dbReference type="InterPro" id="IPR050547">
    <property type="entry name" value="DEAD_box_RNA_helicases"/>
</dbReference>
<dbReference type="InterPro" id="IPR030880">
    <property type="entry name" value="DEAD_helicase_CshA"/>
</dbReference>
<dbReference type="InterPro" id="IPR014001">
    <property type="entry name" value="Helicase_ATP-bd"/>
</dbReference>
<dbReference type="InterPro" id="IPR001650">
    <property type="entry name" value="Helicase_C-like"/>
</dbReference>
<dbReference type="InterPro" id="IPR027417">
    <property type="entry name" value="P-loop_NTPase"/>
</dbReference>
<dbReference type="InterPro" id="IPR000629">
    <property type="entry name" value="RNA-helicase_DEAD-box_CS"/>
</dbReference>
<dbReference type="InterPro" id="IPR014014">
    <property type="entry name" value="RNA_helicase_DEAD_Q_motif"/>
</dbReference>
<dbReference type="PANTHER" id="PTHR47963">
    <property type="entry name" value="DEAD-BOX ATP-DEPENDENT RNA HELICASE 47, MITOCHONDRIAL"/>
    <property type="match status" value="1"/>
</dbReference>
<dbReference type="PANTHER" id="PTHR47963:SF5">
    <property type="entry name" value="DEAD-BOX ATP-DEPENDENT RNA HELICASE CSHA"/>
    <property type="match status" value="1"/>
</dbReference>
<dbReference type="Pfam" id="PF00270">
    <property type="entry name" value="DEAD"/>
    <property type="match status" value="1"/>
</dbReference>
<dbReference type="Pfam" id="PF00271">
    <property type="entry name" value="Helicase_C"/>
    <property type="match status" value="1"/>
</dbReference>
<dbReference type="SMART" id="SM00487">
    <property type="entry name" value="DEXDc"/>
    <property type="match status" value="1"/>
</dbReference>
<dbReference type="SMART" id="SM00490">
    <property type="entry name" value="HELICc"/>
    <property type="match status" value="1"/>
</dbReference>
<dbReference type="SUPFAM" id="SSF52540">
    <property type="entry name" value="P-loop containing nucleoside triphosphate hydrolases"/>
    <property type="match status" value="1"/>
</dbReference>
<dbReference type="PROSITE" id="PS00039">
    <property type="entry name" value="DEAD_ATP_HELICASE"/>
    <property type="match status" value="1"/>
</dbReference>
<dbReference type="PROSITE" id="PS51192">
    <property type="entry name" value="HELICASE_ATP_BIND_1"/>
    <property type="match status" value="1"/>
</dbReference>
<dbReference type="PROSITE" id="PS51194">
    <property type="entry name" value="HELICASE_CTER"/>
    <property type="match status" value="1"/>
</dbReference>
<dbReference type="PROSITE" id="PS51195">
    <property type="entry name" value="Q_MOTIF"/>
    <property type="match status" value="1"/>
</dbReference>
<gene>
    <name evidence="1" type="primary">cshA</name>
    <name type="synonym">aggH</name>
</gene>
<reference key="1">
    <citation type="journal article" date="1999" name="Mol. Microbiol.">
        <title>Autoaggregation of Lactobacillus reuteri is mediated by a putative DEAD-box helicase.</title>
        <authorList>
            <person name="Roos S."/>
            <person name="Lindgren S."/>
            <person name="Jonsson H."/>
        </authorList>
    </citation>
    <scope>NUCLEOTIDE SEQUENCE [GENOMIC DNA]</scope>
    <scope>FUNCTION</scope>
    <scope>SUBCELLULAR LOCATION</scope>
    <scope>DISRUPTION PHENOTYPE</scope>
    <source>
        <strain>ATCC 53608 / 1063</strain>
    </source>
</reference>
<evidence type="ECO:0000255" key="1">
    <source>
        <dbReference type="HAMAP-Rule" id="MF_01493"/>
    </source>
</evidence>
<evidence type="ECO:0000256" key="2">
    <source>
        <dbReference type="SAM" id="MobiDB-lite"/>
    </source>
</evidence>
<evidence type="ECO:0000269" key="3">
    <source>
    </source>
</evidence>
<evidence type="ECO:0000305" key="4"/>
<evidence type="ECO:0000305" key="5">
    <source>
    </source>
</evidence>
<comment type="function">
    <text evidence="1 3">DEAD-box RNA helicase possibly involved in RNA degradation. Unwinds dsRNA in both 5'- and 3'-directions, has RNA-dependent ATPase activity (By similarity). Over-expression leads to cell aggregation.</text>
</comment>
<comment type="catalytic activity">
    <reaction evidence="1">
        <text>ATP + H2O = ADP + phosphate + H(+)</text>
        <dbReference type="Rhea" id="RHEA:13065"/>
        <dbReference type="ChEBI" id="CHEBI:15377"/>
        <dbReference type="ChEBI" id="CHEBI:15378"/>
        <dbReference type="ChEBI" id="CHEBI:30616"/>
        <dbReference type="ChEBI" id="CHEBI:43474"/>
        <dbReference type="ChEBI" id="CHEBI:456216"/>
        <dbReference type="EC" id="3.6.4.13"/>
    </reaction>
</comment>
<comment type="subunit">
    <text evidence="1">Oligomerizes, may be a member of the RNA degradosome.</text>
</comment>
<comment type="subcellular location">
    <subcellularLocation>
        <location evidence="1">Cytoplasm</location>
    </subcellularLocation>
    <subcellularLocation>
        <location evidence="4">Cell membrane</location>
        <topology evidence="4">Peripheral membrane protein</topology>
        <orientation evidence="4">Extracellular side</orientation>
    </subcellularLocation>
</comment>
<comment type="disruption phenotype">
    <text evidence="3">Loss of cellular aggregation.</text>
</comment>
<comment type="similarity">
    <text evidence="1">Belongs to the DEAD box helicase family. CshA subfamily.</text>
</comment>
<comment type="caution">
    <text evidence="5">Has been suggested to be found on the cell surface, but its function as an RNA helicase makes this dubious.</text>
</comment>
<organism>
    <name type="scientific">Limosilactobacillus reuteri</name>
    <name type="common">Lactobacillus reuteri</name>
    <dbReference type="NCBI Taxonomy" id="1598"/>
    <lineage>
        <taxon>Bacteria</taxon>
        <taxon>Bacillati</taxon>
        <taxon>Bacillota</taxon>
        <taxon>Bacilli</taxon>
        <taxon>Lactobacillales</taxon>
        <taxon>Lactobacillaceae</taxon>
        <taxon>Limosilactobacillus</taxon>
    </lineage>
</organism>
<accession>Q9Z6C9</accession>
<feature type="chain" id="PRO_0000430101" description="ATP-dependent RNA helicase CshA">
    <location>
        <begin position="1"/>
        <end position="497"/>
    </location>
</feature>
<feature type="domain" description="Helicase ATP-binding" evidence="1">
    <location>
        <begin position="32"/>
        <end position="202"/>
    </location>
</feature>
<feature type="domain" description="Helicase C-terminal" evidence="1">
    <location>
        <begin position="228"/>
        <end position="373"/>
    </location>
</feature>
<feature type="region of interest" description="Disordered" evidence="2">
    <location>
        <begin position="425"/>
        <end position="497"/>
    </location>
</feature>
<feature type="short sequence motif" description="Q motif">
    <location>
        <begin position="1"/>
        <end position="29"/>
    </location>
</feature>
<feature type="short sequence motif" description="DEAD box">
    <location>
        <begin position="150"/>
        <end position="153"/>
    </location>
</feature>
<feature type="compositionally biased region" description="Low complexity" evidence="2">
    <location>
        <begin position="448"/>
        <end position="458"/>
    </location>
</feature>
<feature type="compositionally biased region" description="Basic residues" evidence="2">
    <location>
        <begin position="459"/>
        <end position="473"/>
    </location>
</feature>
<feature type="compositionally biased region" description="Basic residues" evidence="2">
    <location>
        <begin position="481"/>
        <end position="497"/>
    </location>
</feature>
<feature type="binding site" evidence="1">
    <location>
        <begin position="45"/>
        <end position="52"/>
    </location>
    <ligand>
        <name>ATP</name>
        <dbReference type="ChEBI" id="CHEBI:30616"/>
    </ligand>
</feature>
<name>CSHA_LIMRT</name>
<sequence length="497" mass="56481">MKFSELGLSDSLLKAIKRSGYEEATPIQEQTIPMVLEGKDVIGQAQTGTGKTAAFGLPIIENVDTENPNIQAIIISPTRELAIQTQEELYRLGKDKHVRVQVVYGGADIRRQIKSLKQHPQILVGTPGRLRDHINRHTVKLDHIKTLVLDEADEMLNMGFLEDIESIIKETPDDRQTLLFSATMPPEIKRIGVQFMSDPETVRIKAKELTTDLVDQYYVRARDYEKFDIMTRLIDVQDPDLTIVFGRTKRRVDELSKGLIARGYNAAGIHGDLTQDKRSKIMWKFKNNELDILVATDVAARGLDISGVTHVYNYDIPSDPDSYVHRIGRTGRAGHHGVSLTFVTPNEMDYLHEIEKLTRVRMLPLKPPTAEEAFKGQVASAFNDIDELIAQDSTDRYEEAAEKLLETHNATDLVAALLNNMTKEAASEVPVKITPERPLPRRNKRNNRNGNRNNSHGGNHYRRKNFRRHQHGSHRNDNHGKSHSSRHSFNIRHRKEN</sequence>
<proteinExistence type="inferred from homology"/>